<keyword id="KW-0963">Cytoplasm</keyword>
<keyword id="KW-0548">Nucleotidyltransferase</keyword>
<keyword id="KW-0808">Transferase</keyword>
<dbReference type="EC" id="2.7.7.9"/>
<dbReference type="EMBL" id="X91347">
    <property type="protein sequence ID" value="CAA62689.1"/>
    <property type="molecule type" value="mRNA"/>
</dbReference>
<dbReference type="PIR" id="JC4785">
    <property type="entry name" value="JC4785"/>
</dbReference>
<dbReference type="SMR" id="Q43772"/>
<dbReference type="BRENDA" id="2.7.7.9">
    <property type="organism ID" value="2687"/>
</dbReference>
<dbReference type="SABIO-RK" id="Q43772"/>
<dbReference type="ExpressionAtlas" id="Q43772">
    <property type="expression patterns" value="baseline and differential"/>
</dbReference>
<dbReference type="GO" id="GO:0005737">
    <property type="term" value="C:cytoplasm"/>
    <property type="evidence" value="ECO:0007669"/>
    <property type="project" value="UniProtKB-SubCell"/>
</dbReference>
<dbReference type="GO" id="GO:0003983">
    <property type="term" value="F:UTP:glucose-1-phosphate uridylyltransferase activity"/>
    <property type="evidence" value="ECO:0007669"/>
    <property type="project" value="UniProtKB-EC"/>
</dbReference>
<dbReference type="GO" id="GO:0006011">
    <property type="term" value="P:UDP-alpha-D-glucose metabolic process"/>
    <property type="evidence" value="ECO:0007669"/>
    <property type="project" value="InterPro"/>
</dbReference>
<dbReference type="CDD" id="cd00897">
    <property type="entry name" value="UGPase_euk"/>
    <property type="match status" value="1"/>
</dbReference>
<dbReference type="FunFam" id="2.160.10.10:FF:000001">
    <property type="entry name" value="UTP--glucose-1-phosphate uridylyltransferase"/>
    <property type="match status" value="1"/>
</dbReference>
<dbReference type="FunFam" id="3.90.550.10:FF:000073">
    <property type="entry name" value="UTP--glucose-1-phosphate uridylyltransferase"/>
    <property type="match status" value="1"/>
</dbReference>
<dbReference type="Gene3D" id="2.160.10.10">
    <property type="entry name" value="Hexapeptide repeat proteins"/>
    <property type="match status" value="1"/>
</dbReference>
<dbReference type="Gene3D" id="3.90.550.10">
    <property type="entry name" value="Spore Coat Polysaccharide Biosynthesis Protein SpsA, Chain A"/>
    <property type="match status" value="1"/>
</dbReference>
<dbReference type="InterPro" id="IPR029044">
    <property type="entry name" value="Nucleotide-diphossugar_trans"/>
</dbReference>
<dbReference type="InterPro" id="IPR002618">
    <property type="entry name" value="UDPGP_fam"/>
</dbReference>
<dbReference type="InterPro" id="IPR016267">
    <property type="entry name" value="UDPGP_trans"/>
</dbReference>
<dbReference type="PANTHER" id="PTHR43511">
    <property type="match status" value="1"/>
</dbReference>
<dbReference type="Pfam" id="PF01704">
    <property type="entry name" value="UDPGP"/>
    <property type="match status" value="1"/>
</dbReference>
<dbReference type="PIRSF" id="PIRSF000806">
    <property type="entry name" value="UDPGP"/>
    <property type="match status" value="1"/>
</dbReference>
<dbReference type="SUPFAM" id="SSF53448">
    <property type="entry name" value="Nucleotide-diphospho-sugar transferases"/>
    <property type="match status" value="1"/>
</dbReference>
<evidence type="ECO:0000250" key="1">
    <source>
        <dbReference type="UniProtKB" id="Q16851"/>
    </source>
</evidence>
<evidence type="ECO:0000250" key="2">
    <source>
        <dbReference type="UniProtKB" id="Q9M9P3"/>
    </source>
</evidence>
<evidence type="ECO:0000305" key="3"/>
<proteinExistence type="evidence at transcript level"/>
<protein>
    <recommendedName>
        <fullName>UTP--glucose-1-phosphate uridylyltransferase</fullName>
        <ecNumber>2.7.7.9</ecNumber>
    </recommendedName>
    <alternativeName>
        <fullName>UDP-glucose pyrophosphorylase</fullName>
        <shortName>UDPGP</shortName>
        <shortName>UGPase</shortName>
    </alternativeName>
</protein>
<name>UGPA_HORVU</name>
<comment type="function">
    <text>Plays a central role as a glucosyl donor in cellular metabolic pathways.</text>
</comment>
<comment type="catalytic activity">
    <reaction>
        <text>alpha-D-glucose 1-phosphate + UTP + H(+) = UDP-alpha-D-glucose + diphosphate</text>
        <dbReference type="Rhea" id="RHEA:19889"/>
        <dbReference type="ChEBI" id="CHEBI:15378"/>
        <dbReference type="ChEBI" id="CHEBI:33019"/>
        <dbReference type="ChEBI" id="CHEBI:46398"/>
        <dbReference type="ChEBI" id="CHEBI:58601"/>
        <dbReference type="ChEBI" id="CHEBI:58885"/>
        <dbReference type="EC" id="2.7.7.9"/>
    </reaction>
</comment>
<comment type="subcellular location">
    <subcellularLocation>
        <location>Cytoplasm</location>
    </subcellularLocation>
</comment>
<comment type="similarity">
    <text evidence="3">Belongs to the UDPGP type 1 family.</text>
</comment>
<accession>Q43772</accession>
<sequence length="473" mass="51644">MAAAAVAADSKIDGLRDAVAKLGEISENEKAGFISLVSRYLSGEAEQIEWSKIQTPTDEVVVPYDTLAPPPEDLDAMKALLDKLVVLKLNGGLGTTMGCTGPKSVIEVRNGFTFLDLIVIQIESLNKKYGCSVPLLLMNSFNTHDDTQKIVEKYSNSNIEIHTFNQSQYPRIVTEDFLPLPSKGQTGKDGWYPPGHGDVFPSLNNSGKLDTLLSQGKEYVFVANSDNLGAIVDIKILNHLIHNQNEYCMEVTPKTLADVKGGTLISYEGRVQLLEIAQVPDEHVDEFKSIEKFKIFNTNNLWVNLKAIKRLVDAEALKMEIIPNPKEVDGVKVLQLETAAGAAIRFFEKAIGINVPRSRFLPVKATSDLLLVQSDLYTLVDGYVIRNPARVKPSNPSIELGPEFKKVANFLARFKSIPSIVELDSLKVSGDVSFGSGVVLKGNVTIAAKAGVKLEIPDGAVLENKDINGPEDI</sequence>
<feature type="chain" id="PRO_0000185759" description="UTP--glucose-1-phosphate uridylyltransferase">
    <location>
        <begin position="1"/>
        <end position="473"/>
    </location>
</feature>
<feature type="binding site" evidence="2">
    <location>
        <begin position="89"/>
        <end position="92"/>
    </location>
    <ligand>
        <name>UTP</name>
        <dbReference type="ChEBI" id="CHEBI:46398"/>
    </ligand>
</feature>
<feature type="binding site" evidence="1">
    <location>
        <begin position="91"/>
        <end position="92"/>
    </location>
    <ligand>
        <name>substrate</name>
    </ligand>
</feature>
<feature type="binding site" evidence="2">
    <location>
        <position position="103"/>
    </location>
    <ligand>
        <name>UTP</name>
        <dbReference type="ChEBI" id="CHEBI:46398"/>
    </ligand>
</feature>
<feature type="binding site" evidence="2">
    <location>
        <position position="166"/>
    </location>
    <ligand>
        <name>UTP</name>
        <dbReference type="ChEBI" id="CHEBI:46398"/>
    </ligand>
</feature>
<feature type="binding site" evidence="2">
    <location>
        <position position="195"/>
    </location>
    <ligand>
        <name>UTP</name>
        <dbReference type="ChEBI" id="CHEBI:46398"/>
    </ligand>
</feature>
<feature type="binding site" evidence="1">
    <location>
        <position position="196"/>
    </location>
    <ligand>
        <name>substrate</name>
    </ligand>
</feature>
<feature type="binding site" evidence="1">
    <location>
        <begin position="224"/>
        <end position="226"/>
    </location>
    <ligand>
        <name>substrate</name>
    </ligand>
</feature>
<feature type="binding site" evidence="2">
    <location>
        <position position="226"/>
    </location>
    <ligand>
        <name>UTP</name>
        <dbReference type="ChEBI" id="CHEBI:46398"/>
    </ligand>
</feature>
<feature type="binding site" evidence="2">
    <location>
        <position position="364"/>
    </location>
    <ligand>
        <name>UTP</name>
        <dbReference type="ChEBI" id="CHEBI:46398"/>
    </ligand>
</feature>
<reference key="1">
    <citation type="journal article" date="1996" name="Gene">
        <title>Cloning and characterization of several cDNAs for UDP-glucose pyrophosphorylase from barley (Hordeum vulgare) tissues.</title>
        <authorList>
            <person name="Eimert K."/>
            <person name="Villand P."/>
            <person name="Kilian A."/>
            <person name="Kleczkowski L.A."/>
        </authorList>
    </citation>
    <scope>NUCLEOTIDE SEQUENCE [MRNA]</scope>
    <source>
        <strain>cv. Bomi</strain>
        <tissue>Endosperm</tissue>
        <tissue>Leaf</tissue>
    </source>
</reference>
<organism>
    <name type="scientific">Hordeum vulgare</name>
    <name type="common">Barley</name>
    <dbReference type="NCBI Taxonomy" id="4513"/>
    <lineage>
        <taxon>Eukaryota</taxon>
        <taxon>Viridiplantae</taxon>
        <taxon>Streptophyta</taxon>
        <taxon>Embryophyta</taxon>
        <taxon>Tracheophyta</taxon>
        <taxon>Spermatophyta</taxon>
        <taxon>Magnoliopsida</taxon>
        <taxon>Liliopsida</taxon>
        <taxon>Poales</taxon>
        <taxon>Poaceae</taxon>
        <taxon>BOP clade</taxon>
        <taxon>Pooideae</taxon>
        <taxon>Triticodae</taxon>
        <taxon>Triticeae</taxon>
        <taxon>Hordeinae</taxon>
        <taxon>Hordeum</taxon>
    </lineage>
</organism>